<comment type="function">
    <text evidence="5">Plays a role with ILK in promoting the cell adhesion and spreading of leukocytes.</text>
</comment>
<comment type="subunit">
    <text evidence="5">Interacts with ILK; the interaction promotes the establishment of cell polarity required for leukocyte migration (PubMed:16517730). Interacts with ARHGEF6; the guanine nucleotide exchange factor activity of ARHGEF6 is essential for the PARVG-induced enhancement of cell spreading (PubMed:16517730).</text>
</comment>
<comment type="interaction">
    <interactant intactId="EBI-3921217">
        <id>Q9HBI0</id>
    </interactant>
    <interactant intactId="EBI-11317841">
        <id>Q9H161</id>
        <label>ALX4</label>
    </interactant>
    <organismsDiffer>false</organismsDiffer>
    <experiments>3</experiments>
</comment>
<comment type="interaction">
    <interactant intactId="EBI-3921217">
        <id>Q9HBI0</id>
    </interactant>
    <interactant intactId="EBI-713602">
        <id>Q9BQD7</id>
        <label>ANTKMT</label>
    </interactant>
    <organismsDiffer>false</organismsDiffer>
    <experiments>3</experiments>
</comment>
<comment type="interaction">
    <interactant intactId="EBI-3921217">
        <id>Q9HBI0</id>
    </interactant>
    <interactant intactId="EBI-12143631">
        <id>Q6ZTQ4</id>
        <label>CDHR3</label>
    </interactant>
    <organismsDiffer>false</organismsDiffer>
    <experiments>3</experiments>
</comment>
<comment type="interaction">
    <interactant intactId="EBI-3921217">
        <id>Q9HBI0</id>
    </interactant>
    <interactant intactId="EBI-742422">
        <id>Q96M91</id>
        <label>CFAP53</label>
    </interactant>
    <organismsDiffer>false</organismsDiffer>
    <experiments>3</experiments>
</comment>
<comment type="interaction">
    <interactant intactId="EBI-3921217">
        <id>Q9HBI0</id>
    </interactant>
    <interactant intactId="EBI-12843274">
        <id>Q8N4W3</id>
        <label>CSF3</label>
    </interactant>
    <organismsDiffer>false</organismsDiffer>
    <experiments>3</experiments>
</comment>
<comment type="interaction">
    <interactant intactId="EBI-3921217">
        <id>Q9HBI0</id>
    </interactant>
    <interactant intactId="EBI-742054">
        <id>Q96D03</id>
        <label>DDIT4L</label>
    </interactant>
    <organismsDiffer>false</organismsDiffer>
    <experiments>3</experiments>
</comment>
<comment type="interaction">
    <interactant intactId="EBI-3921217">
        <id>Q9HBI0</id>
    </interactant>
    <interactant intactId="EBI-10976677">
        <id>G5E9A7</id>
        <label>DMWD</label>
    </interactant>
    <organismsDiffer>false</organismsDiffer>
    <experiments>3</experiments>
</comment>
<comment type="interaction">
    <interactant intactId="EBI-3921217">
        <id>Q9HBI0</id>
    </interactant>
    <interactant intactId="EBI-448167">
        <id>P24522</id>
        <label>GADD45A</label>
    </interactant>
    <organismsDiffer>false</organismsDiffer>
    <experiments>3</experiments>
</comment>
<comment type="interaction">
    <interactant intactId="EBI-3921217">
        <id>Q9HBI0</id>
    </interactant>
    <interactant intactId="EBI-747644">
        <id>Q13418</id>
        <label>ILK</label>
    </interactant>
    <organismsDiffer>false</organismsDiffer>
    <experiments>14</experiments>
</comment>
<comment type="interaction">
    <interactant intactId="EBI-3921217">
        <id>Q9HBI0</id>
    </interactant>
    <interactant intactId="EBI-11954971">
        <id>Q96MP8-2</id>
        <label>KCTD7</label>
    </interactant>
    <organismsDiffer>false</organismsDiffer>
    <experiments>3</experiments>
</comment>
<comment type="interaction">
    <interactant intactId="EBI-3921217">
        <id>Q9HBI0</id>
    </interactant>
    <interactant intactId="EBI-10247181">
        <id>Q5THT1</id>
        <label>KLHL32</label>
    </interactant>
    <organismsDiffer>false</organismsDiffer>
    <experiments>3</experiments>
</comment>
<comment type="interaction">
    <interactant intactId="EBI-3921217">
        <id>Q9HBI0</id>
    </interactant>
    <interactant intactId="EBI-12039345">
        <id>Q9UBR4-2</id>
        <label>LHX3</label>
    </interactant>
    <organismsDiffer>false</organismsDiffer>
    <experiments>3</experiments>
</comment>
<comment type="interaction">
    <interactant intactId="EBI-3921217">
        <id>Q9HBI0</id>
    </interactant>
    <interactant intactId="EBI-2864512">
        <id>P50221</id>
        <label>MEOX1</label>
    </interactant>
    <organismsDiffer>false</organismsDiffer>
    <experiments>3</experiments>
</comment>
<comment type="interaction">
    <interactant intactId="EBI-3921217">
        <id>Q9HBI0</id>
    </interactant>
    <interactant intactId="EBI-748397">
        <id>P50222</id>
        <label>MEOX2</label>
    </interactant>
    <organismsDiffer>false</organismsDiffer>
    <experiments>3</experiments>
</comment>
<comment type="interaction">
    <interactant intactId="EBI-3921217">
        <id>Q9HBI0</id>
    </interactant>
    <interactant intactId="EBI-16439278">
        <id>Q6FHY5</id>
        <label>MEOX2</label>
    </interactant>
    <organismsDiffer>false</organismsDiffer>
    <experiments>3</experiments>
</comment>
<comment type="interaction">
    <interactant intactId="EBI-3921217">
        <id>Q9HBI0</id>
    </interactant>
    <interactant intactId="EBI-928842">
        <id>Q9GZM8</id>
        <label>NDEL1</label>
    </interactant>
    <organismsDiffer>false</organismsDiffer>
    <experiments>3</experiments>
</comment>
<comment type="interaction">
    <interactant intactId="EBI-3921217">
        <id>Q9HBI0</id>
    </interactant>
    <interactant intactId="EBI-350517">
        <id>Q9NR12</id>
        <label>PDLIM7</label>
    </interactant>
    <organismsDiffer>false</organismsDiffer>
    <experiments>3</experiments>
</comment>
<comment type="interaction">
    <interactant intactId="EBI-3921217">
        <id>Q9HBI0</id>
    </interactant>
    <interactant intactId="EBI-347928">
        <id>P62487</id>
        <label>POLR2G</label>
    </interactant>
    <organismsDiffer>false</organismsDiffer>
    <experiments>3</experiments>
</comment>
<comment type="interaction">
    <interactant intactId="EBI-3921217">
        <id>Q9HBI0</id>
    </interactant>
    <interactant intactId="EBI-12029004">
        <id>P78424</id>
        <label>POU6F2</label>
    </interactant>
    <organismsDiffer>false</organismsDiffer>
    <experiments>3</experiments>
</comment>
<comment type="interaction">
    <interactant intactId="EBI-3921217">
        <id>Q9HBI0</id>
    </interactant>
    <interactant intactId="EBI-307352">
        <id>Q04864</id>
        <label>REL</label>
    </interactant>
    <organismsDiffer>false</organismsDiffer>
    <experiments>3</experiments>
</comment>
<comment type="interaction">
    <interactant intactId="EBI-3921217">
        <id>Q9HBI0</id>
    </interactant>
    <interactant intactId="EBI-10829018">
        <id>Q04864-2</id>
        <label>REL</label>
    </interactant>
    <organismsDiffer>false</organismsDiffer>
    <experiments>3</experiments>
</comment>
<comment type="interaction">
    <interactant intactId="EBI-3921217">
        <id>Q9HBI0</id>
    </interactant>
    <interactant intactId="EBI-2822051">
        <id>Q14140</id>
        <label>SERTAD2</label>
    </interactant>
    <organismsDiffer>false</organismsDiffer>
    <experiments>3</experiments>
</comment>
<comment type="interaction">
    <interactant intactId="EBI-3921217">
        <id>Q9HBI0</id>
    </interactant>
    <interactant intactId="EBI-5235340">
        <id>Q7Z699</id>
        <label>SPRED1</label>
    </interactant>
    <organismsDiffer>false</organismsDiffer>
    <experiments>3</experiments>
</comment>
<comment type="interaction">
    <interactant intactId="EBI-3921217">
        <id>Q9HBI0</id>
    </interactant>
    <interactant intactId="EBI-717810">
        <id>Q08117</id>
        <label>TLE5</label>
    </interactant>
    <organismsDiffer>false</organismsDiffer>
    <experiments>3</experiments>
</comment>
<comment type="interaction">
    <interactant intactId="EBI-3921217">
        <id>Q9HBI0</id>
    </interactant>
    <interactant intactId="EBI-11741437">
        <id>Q08117-2</id>
        <label>TLE5</label>
    </interactant>
    <organismsDiffer>false</organismsDiffer>
    <experiments>5</experiments>
</comment>
<comment type="interaction">
    <interactant intactId="EBI-3921217">
        <id>Q9HBI0</id>
    </interactant>
    <interactant intactId="EBI-947178">
        <id>Q92519</id>
        <label>TRIB2</label>
    </interactant>
    <organismsDiffer>false</organismsDiffer>
    <experiments>5</experiments>
</comment>
<comment type="interaction">
    <interactant intactId="EBI-3921217">
        <id>Q9HBI0</id>
    </interactant>
    <interactant intactId="EBI-2130429">
        <id>Q9BYV2</id>
        <label>TRIM54</label>
    </interactant>
    <organismsDiffer>false</organismsDiffer>
    <experiments>3</experiments>
</comment>
<comment type="interaction">
    <interactant intactId="EBI-3921217">
        <id>Q9HBI0</id>
    </interactant>
    <interactant intactId="EBI-10241197">
        <id>Q3SY00</id>
        <label>TSGA10IP</label>
    </interactant>
    <organismsDiffer>false</organismsDiffer>
    <experiments>3</experiments>
</comment>
<comment type="interaction">
    <interactant intactId="EBI-3921217">
        <id>Q9HBI0</id>
    </interactant>
    <interactant intactId="EBI-739895">
        <id>Q8N6Y0</id>
        <label>USHBP1</label>
    </interactant>
    <organismsDiffer>false</organismsDiffer>
    <experiments>6</experiments>
</comment>
<comment type="interaction">
    <interactant intactId="EBI-3921217">
        <id>Q9HBI0</id>
    </interactant>
    <interactant intactId="EBI-743265">
        <id>Q9BUY5</id>
        <label>ZNF426</label>
    </interactant>
    <organismsDiffer>false</organismsDiffer>
    <experiments>3</experiments>
</comment>
<comment type="interaction">
    <interactant intactId="EBI-3921217">
        <id>Q9HBI0</id>
    </interactant>
    <interactant intactId="EBI-17234977">
        <id>A0A1U9X8X8</id>
    </interactant>
    <organismsDiffer>false</organismsDiffer>
    <experiments>3</experiments>
</comment>
<comment type="interaction">
    <interactant intactId="EBI-3921217">
        <id>Q9HBI0</id>
    </interactant>
    <interactant intactId="EBI-25492395">
        <id>PRO_0000449633</id>
        <label>rep</label>
        <dbReference type="UniProtKB" id="P0DTD1"/>
    </interactant>
    <organismsDiffer>true</organismsDiffer>
    <experiments>5</experiments>
</comment>
<comment type="subcellular location">
    <subcellularLocation>
        <location evidence="5">Cell junction</location>
        <location evidence="5">Focal adhesion</location>
    </subcellularLocation>
    <subcellularLocation>
        <location evidence="1">Cell membrane</location>
        <topology evidence="1">Peripheral membrane protein</topology>
        <orientation evidence="1">Cytoplasmic side</orientation>
    </subcellularLocation>
    <subcellularLocation>
        <location evidence="1">Cytoplasm</location>
        <location evidence="1">Cytoskeleton</location>
    </subcellularLocation>
    <text evidence="1">Constituent of focal adhesions.</text>
</comment>
<comment type="alternative products">
    <event type="alternative splicing"/>
    <isoform>
        <id>Q9HBI0-1</id>
        <name>1</name>
        <sequence type="displayed"/>
    </isoform>
    <isoform>
        <id>Q9HBI0-2</id>
        <name>2</name>
        <sequence type="described" ref="VSP_004540 VSP_004541"/>
    </isoform>
    <isoform>
        <id>Q9HBI0-3</id>
        <name>3</name>
        <sequence type="described" ref="VSP_012953 VSP_012954"/>
    </isoform>
    <isoform>
        <id>Q9HBI0-4</id>
        <name>4</name>
        <sequence type="described" ref="VSP_045145 VSP_045146 VSP_045147"/>
    </isoform>
    <isoform>
        <id>Q9HBI0-5</id>
        <name>5</name>
        <sequence type="described" ref="VSP_045146 VSP_045147"/>
    </isoform>
</comment>
<comment type="tissue specificity">
    <text evidence="4">Expressed predominantly in lymphoid organs, including spleen, thymus, lymph node, bone marrow and peripheral blood leukocytes and moderately in the digestive tract, including stomach, duodenum, jejunum, ileum, ileocecum and appendix, as well as in lung and liver. Also expressed in tumors, but at a lower level than in the corresponding normal tissues.</text>
</comment>
<comment type="similarity">
    <text evidence="8">Belongs to the parvin family.</text>
</comment>
<dbReference type="EMBL" id="AF237772">
    <property type="protein sequence ID" value="AAG27174.1"/>
    <property type="molecule type" value="mRNA"/>
</dbReference>
<dbReference type="EMBL" id="AL590887">
    <property type="protein sequence ID" value="CAC37414.1"/>
    <property type="molecule type" value="mRNA"/>
</dbReference>
<dbReference type="EMBL" id="AL355092">
    <property type="protein sequence ID" value="CAB90188.1"/>
    <property type="molecule type" value="mRNA"/>
</dbReference>
<dbReference type="EMBL" id="CR456480">
    <property type="protein sequence ID" value="CAG30366.1"/>
    <property type="molecule type" value="mRNA"/>
</dbReference>
<dbReference type="EMBL" id="AK293360">
    <property type="protein sequence ID" value="BAG56876.1"/>
    <property type="molecule type" value="mRNA"/>
</dbReference>
<dbReference type="EMBL" id="AK307294">
    <property type="status" value="NOT_ANNOTATED_CDS"/>
    <property type="molecule type" value="mRNA"/>
</dbReference>
<dbReference type="EMBL" id="AL031595">
    <property type="status" value="NOT_ANNOTATED_CDS"/>
    <property type="molecule type" value="Genomic_DNA"/>
</dbReference>
<dbReference type="EMBL" id="BC034406">
    <property type="protein sequence ID" value="AAH34406.1"/>
    <property type="molecule type" value="mRNA"/>
</dbReference>
<dbReference type="CCDS" id="CCDS14057.1">
    <molecule id="Q9HBI0-1"/>
</dbReference>
<dbReference type="RefSeq" id="NP_001131077.1">
    <molecule id="Q9HBI0-1"/>
    <property type="nucleotide sequence ID" value="NM_001137605.3"/>
</dbReference>
<dbReference type="RefSeq" id="NP_071424.1">
    <molecule id="Q9HBI0-1"/>
    <property type="nucleotide sequence ID" value="NM_022141.7"/>
</dbReference>
<dbReference type="RefSeq" id="XP_005261759.1">
    <property type="nucleotide sequence ID" value="XM_005261702.3"/>
</dbReference>
<dbReference type="SMR" id="Q9HBI0"/>
<dbReference type="BioGRID" id="122059">
    <property type="interactions" value="50"/>
</dbReference>
<dbReference type="FunCoup" id="Q9HBI0">
    <property type="interactions" value="354"/>
</dbReference>
<dbReference type="IntAct" id="Q9HBI0">
    <property type="interactions" value="50"/>
</dbReference>
<dbReference type="MINT" id="Q9HBI0"/>
<dbReference type="STRING" id="9606.ENSP00000391583"/>
<dbReference type="ChEMBL" id="CHEMBL5793"/>
<dbReference type="iPTMnet" id="Q9HBI0"/>
<dbReference type="PhosphoSitePlus" id="Q9HBI0"/>
<dbReference type="BioMuta" id="PARVG"/>
<dbReference type="DMDM" id="20143882"/>
<dbReference type="jPOST" id="Q9HBI0"/>
<dbReference type="MassIVE" id="Q9HBI0"/>
<dbReference type="PaxDb" id="9606-ENSP00000391583"/>
<dbReference type="PeptideAtlas" id="Q9HBI0"/>
<dbReference type="ProteomicsDB" id="18673"/>
<dbReference type="ProteomicsDB" id="3899"/>
<dbReference type="ProteomicsDB" id="81556">
    <molecule id="Q9HBI0-1"/>
</dbReference>
<dbReference type="ProteomicsDB" id="81557">
    <molecule id="Q9HBI0-2"/>
</dbReference>
<dbReference type="ProteomicsDB" id="81558">
    <molecule id="Q9HBI0-3"/>
</dbReference>
<dbReference type="Pumba" id="Q9HBI0"/>
<dbReference type="TopDownProteomics" id="Q9HBI0-2">
    <molecule id="Q9HBI0-2"/>
</dbReference>
<dbReference type="Antibodypedia" id="27676">
    <property type="antibodies" value="112 antibodies from 26 providers"/>
</dbReference>
<dbReference type="DNASU" id="64098"/>
<dbReference type="Ensembl" id="ENST00000356909.7">
    <molecule id="Q9HBI0-3"/>
    <property type="protein sequence ID" value="ENSP00000349378.3"/>
    <property type="gene ID" value="ENSG00000138964.18"/>
</dbReference>
<dbReference type="Ensembl" id="ENST00000422871.5">
    <molecule id="Q9HBI0-1"/>
    <property type="protein sequence ID" value="ENSP00000391453.1"/>
    <property type="gene ID" value="ENSG00000138964.18"/>
</dbReference>
<dbReference type="Ensembl" id="ENST00000444313.8">
    <molecule id="Q9HBI0-1"/>
    <property type="protein sequence ID" value="ENSP00000391583.2"/>
    <property type="gene ID" value="ENSG00000138964.18"/>
</dbReference>
<dbReference type="GeneID" id="64098"/>
<dbReference type="KEGG" id="hsa:64098"/>
<dbReference type="MANE-Select" id="ENST00000444313.8">
    <property type="protein sequence ID" value="ENSP00000391583.2"/>
    <property type="RefSeq nucleotide sequence ID" value="NM_022141.7"/>
    <property type="RefSeq protein sequence ID" value="NP_071424.1"/>
</dbReference>
<dbReference type="UCSC" id="uc003bep.4">
    <molecule id="Q9HBI0-1"/>
    <property type="organism name" value="human"/>
</dbReference>
<dbReference type="AGR" id="HGNC:14654"/>
<dbReference type="CTD" id="64098"/>
<dbReference type="DisGeNET" id="64098"/>
<dbReference type="GeneCards" id="PARVG"/>
<dbReference type="HGNC" id="HGNC:14654">
    <property type="gene designation" value="PARVG"/>
</dbReference>
<dbReference type="HPA" id="ENSG00000138964">
    <property type="expression patterns" value="Tissue enhanced (bone marrow, lymphoid tissue)"/>
</dbReference>
<dbReference type="MIM" id="608122">
    <property type="type" value="gene"/>
</dbReference>
<dbReference type="neXtProt" id="NX_Q9HBI0"/>
<dbReference type="OpenTargets" id="ENSG00000138964"/>
<dbReference type="PharmGKB" id="PA32952"/>
<dbReference type="VEuPathDB" id="HostDB:ENSG00000138964"/>
<dbReference type="eggNOG" id="KOG3631">
    <property type="taxonomic scope" value="Eukaryota"/>
</dbReference>
<dbReference type="GeneTree" id="ENSGT00950000183194"/>
<dbReference type="HOGENOM" id="CLU_047624_0_0_1"/>
<dbReference type="InParanoid" id="Q9HBI0"/>
<dbReference type="OMA" id="SEHIVVQ"/>
<dbReference type="OrthoDB" id="2099265at2759"/>
<dbReference type="PAN-GO" id="Q9HBI0">
    <property type="GO annotations" value="8 GO annotations based on evolutionary models"/>
</dbReference>
<dbReference type="PhylomeDB" id="Q9HBI0"/>
<dbReference type="TreeFam" id="TF314025"/>
<dbReference type="PathwayCommons" id="Q9HBI0"/>
<dbReference type="SignaLink" id="Q9HBI0"/>
<dbReference type="BioGRID-ORCS" id="64098">
    <property type="hits" value="10 hits in 1147 CRISPR screens"/>
</dbReference>
<dbReference type="GeneWiki" id="PARVG"/>
<dbReference type="GenomeRNAi" id="64098"/>
<dbReference type="Pharos" id="Q9HBI0">
    <property type="development level" value="Tbio"/>
</dbReference>
<dbReference type="PRO" id="PR:Q9HBI0"/>
<dbReference type="Proteomes" id="UP000005640">
    <property type="component" value="Chromosome 22"/>
</dbReference>
<dbReference type="RNAct" id="Q9HBI0">
    <property type="molecule type" value="protein"/>
</dbReference>
<dbReference type="Bgee" id="ENSG00000138964">
    <property type="expression patterns" value="Expressed in granulocyte and 146 other cell types or tissues"/>
</dbReference>
<dbReference type="ExpressionAtlas" id="Q9HBI0">
    <property type="expression patterns" value="baseline and differential"/>
</dbReference>
<dbReference type="GO" id="GO:0015629">
    <property type="term" value="C:actin cytoskeleton"/>
    <property type="evidence" value="ECO:0000318"/>
    <property type="project" value="GO_Central"/>
</dbReference>
<dbReference type="GO" id="GO:0005737">
    <property type="term" value="C:cytoplasm"/>
    <property type="evidence" value="ECO:0000318"/>
    <property type="project" value="GO_Central"/>
</dbReference>
<dbReference type="GO" id="GO:0005856">
    <property type="term" value="C:cytoskeleton"/>
    <property type="evidence" value="ECO:0000304"/>
    <property type="project" value="UniProtKB"/>
</dbReference>
<dbReference type="GO" id="GO:0005925">
    <property type="term" value="C:focal adhesion"/>
    <property type="evidence" value="ECO:0000318"/>
    <property type="project" value="GO_Central"/>
</dbReference>
<dbReference type="GO" id="GO:0005886">
    <property type="term" value="C:plasma membrane"/>
    <property type="evidence" value="ECO:0007669"/>
    <property type="project" value="UniProtKB-SubCell"/>
</dbReference>
<dbReference type="GO" id="GO:0003779">
    <property type="term" value="F:actin binding"/>
    <property type="evidence" value="ECO:0000318"/>
    <property type="project" value="GO_Central"/>
</dbReference>
<dbReference type="GO" id="GO:0030036">
    <property type="term" value="P:actin cytoskeleton organization"/>
    <property type="evidence" value="ECO:0000318"/>
    <property type="project" value="GO_Central"/>
</dbReference>
<dbReference type="GO" id="GO:0030031">
    <property type="term" value="P:cell projection assembly"/>
    <property type="evidence" value="ECO:0000318"/>
    <property type="project" value="GO_Central"/>
</dbReference>
<dbReference type="GO" id="GO:0007160">
    <property type="term" value="P:cell-matrix adhesion"/>
    <property type="evidence" value="ECO:0000304"/>
    <property type="project" value="UniProtKB"/>
</dbReference>
<dbReference type="GO" id="GO:0071963">
    <property type="term" value="P:establishment or maintenance of cell polarity regulating cell shape"/>
    <property type="evidence" value="ECO:0000318"/>
    <property type="project" value="GO_Central"/>
</dbReference>
<dbReference type="GO" id="GO:0034446">
    <property type="term" value="P:substrate adhesion-dependent cell spreading"/>
    <property type="evidence" value="ECO:0000318"/>
    <property type="project" value="GO_Central"/>
</dbReference>
<dbReference type="CDD" id="cd21305">
    <property type="entry name" value="CH_PARVG_rpt1"/>
    <property type="match status" value="1"/>
</dbReference>
<dbReference type="CDD" id="cd21307">
    <property type="entry name" value="CH_PARVG_rpt2"/>
    <property type="match status" value="1"/>
</dbReference>
<dbReference type="FunFam" id="1.10.418.10:FF:000011">
    <property type="entry name" value="Parvin, beta"/>
    <property type="match status" value="1"/>
</dbReference>
<dbReference type="FunFam" id="1.10.418.10:FF:000064">
    <property type="entry name" value="Parvin, gamma"/>
    <property type="match status" value="1"/>
</dbReference>
<dbReference type="Gene3D" id="1.10.418.10">
    <property type="entry name" value="Calponin-like domain"/>
    <property type="match status" value="2"/>
</dbReference>
<dbReference type="InterPro" id="IPR001715">
    <property type="entry name" value="CH_dom"/>
</dbReference>
<dbReference type="InterPro" id="IPR036872">
    <property type="entry name" value="CH_dom_sf"/>
</dbReference>
<dbReference type="InterPro" id="IPR028433">
    <property type="entry name" value="Parvin"/>
</dbReference>
<dbReference type="PANTHER" id="PTHR12114:SF1">
    <property type="entry name" value="GAMMA-PARVIN"/>
    <property type="match status" value="1"/>
</dbReference>
<dbReference type="PANTHER" id="PTHR12114">
    <property type="entry name" value="PARVIN"/>
    <property type="match status" value="1"/>
</dbReference>
<dbReference type="Pfam" id="PF00307">
    <property type="entry name" value="CH"/>
    <property type="match status" value="2"/>
</dbReference>
<dbReference type="PIRSF" id="PIRSF039131">
    <property type="entry name" value="Parvin"/>
    <property type="match status" value="1"/>
</dbReference>
<dbReference type="SMART" id="SM00033">
    <property type="entry name" value="CH"/>
    <property type="match status" value="1"/>
</dbReference>
<dbReference type="SUPFAM" id="SSF47576">
    <property type="entry name" value="Calponin-homology domain, CH-domain"/>
    <property type="match status" value="1"/>
</dbReference>
<dbReference type="PROSITE" id="PS50021">
    <property type="entry name" value="CH"/>
    <property type="match status" value="2"/>
</dbReference>
<organism>
    <name type="scientific">Homo sapiens</name>
    <name type="common">Human</name>
    <dbReference type="NCBI Taxonomy" id="9606"/>
    <lineage>
        <taxon>Eukaryota</taxon>
        <taxon>Metazoa</taxon>
        <taxon>Chordata</taxon>
        <taxon>Craniata</taxon>
        <taxon>Vertebrata</taxon>
        <taxon>Euteleostomi</taxon>
        <taxon>Mammalia</taxon>
        <taxon>Eutheria</taxon>
        <taxon>Euarchontoglires</taxon>
        <taxon>Primates</taxon>
        <taxon>Haplorrhini</taxon>
        <taxon>Catarrhini</taxon>
        <taxon>Hominidae</taxon>
        <taxon>Homo</taxon>
    </lineage>
</organism>
<reference key="1">
    <citation type="journal article" date="2001" name="J. Cell Sci.">
        <title>Parvin, a 42 kDa focal adhesion protein, related to the alpha-actinin superfamily.</title>
        <authorList>
            <person name="Olski T.M."/>
            <person name="Noegel A.A."/>
            <person name="Korenbaum E."/>
        </authorList>
    </citation>
    <scope>NUCLEOTIDE SEQUENCE (ISOFORM 1)</scope>
</reference>
<reference key="2">
    <citation type="journal article" date="2003" name="Genome Res.">
        <title>Reevaluating human gene annotation: a second-generation analysis of chromosome 22.</title>
        <authorList>
            <person name="Collins J.E."/>
            <person name="Goward M.E."/>
            <person name="Cole C.G."/>
            <person name="Smink L.J."/>
            <person name="Huckle E.J."/>
            <person name="Knowles S."/>
            <person name="Bye J.M."/>
            <person name="Beare D.M."/>
            <person name="Dunham I."/>
        </authorList>
    </citation>
    <scope>NUCLEOTIDE SEQUENCE [LARGE SCALE MRNA] (ISOFORMS 2 AND 3)</scope>
    <source>
        <tissue>Fetal brain</tissue>
    </source>
</reference>
<reference key="3">
    <citation type="journal article" date="2004" name="Genome Biol.">
        <title>A genome annotation-driven approach to cloning the human ORFeome.</title>
        <authorList>
            <person name="Collins J.E."/>
            <person name="Wright C.L."/>
            <person name="Edwards C.A."/>
            <person name="Davis M.P."/>
            <person name="Grinham J.A."/>
            <person name="Cole C.G."/>
            <person name="Goward M.E."/>
            <person name="Aguado B."/>
            <person name="Mallya M."/>
            <person name="Mokrab Y."/>
            <person name="Huckle E.J."/>
            <person name="Beare D.M."/>
            <person name="Dunham I."/>
        </authorList>
    </citation>
    <scope>NUCLEOTIDE SEQUENCE [LARGE SCALE MRNA] (ISOFORM 1)</scope>
</reference>
<reference key="4">
    <citation type="journal article" date="2004" name="Nat. Genet.">
        <title>Complete sequencing and characterization of 21,243 full-length human cDNAs.</title>
        <authorList>
            <person name="Ota T."/>
            <person name="Suzuki Y."/>
            <person name="Nishikawa T."/>
            <person name="Otsuki T."/>
            <person name="Sugiyama T."/>
            <person name="Irie R."/>
            <person name="Wakamatsu A."/>
            <person name="Hayashi K."/>
            <person name="Sato H."/>
            <person name="Nagai K."/>
            <person name="Kimura K."/>
            <person name="Makita H."/>
            <person name="Sekine M."/>
            <person name="Obayashi M."/>
            <person name="Nishi T."/>
            <person name="Shibahara T."/>
            <person name="Tanaka T."/>
            <person name="Ishii S."/>
            <person name="Yamamoto J."/>
            <person name="Saito K."/>
            <person name="Kawai Y."/>
            <person name="Isono Y."/>
            <person name="Nakamura Y."/>
            <person name="Nagahari K."/>
            <person name="Murakami K."/>
            <person name="Yasuda T."/>
            <person name="Iwayanagi T."/>
            <person name="Wagatsuma M."/>
            <person name="Shiratori A."/>
            <person name="Sudo H."/>
            <person name="Hosoiri T."/>
            <person name="Kaku Y."/>
            <person name="Kodaira H."/>
            <person name="Kondo H."/>
            <person name="Sugawara M."/>
            <person name="Takahashi M."/>
            <person name="Kanda K."/>
            <person name="Yokoi T."/>
            <person name="Furuya T."/>
            <person name="Kikkawa E."/>
            <person name="Omura Y."/>
            <person name="Abe K."/>
            <person name="Kamihara K."/>
            <person name="Katsuta N."/>
            <person name="Sato K."/>
            <person name="Tanikawa M."/>
            <person name="Yamazaki M."/>
            <person name="Ninomiya K."/>
            <person name="Ishibashi T."/>
            <person name="Yamashita H."/>
            <person name="Murakawa K."/>
            <person name="Fujimori K."/>
            <person name="Tanai H."/>
            <person name="Kimata M."/>
            <person name="Watanabe M."/>
            <person name="Hiraoka S."/>
            <person name="Chiba Y."/>
            <person name="Ishida S."/>
            <person name="Ono Y."/>
            <person name="Takiguchi S."/>
            <person name="Watanabe S."/>
            <person name="Yosida M."/>
            <person name="Hotuta T."/>
            <person name="Kusano J."/>
            <person name="Kanehori K."/>
            <person name="Takahashi-Fujii A."/>
            <person name="Hara H."/>
            <person name="Tanase T.-O."/>
            <person name="Nomura Y."/>
            <person name="Togiya S."/>
            <person name="Komai F."/>
            <person name="Hara R."/>
            <person name="Takeuchi K."/>
            <person name="Arita M."/>
            <person name="Imose N."/>
            <person name="Musashino K."/>
            <person name="Yuuki H."/>
            <person name="Oshima A."/>
            <person name="Sasaki N."/>
            <person name="Aotsuka S."/>
            <person name="Yoshikawa Y."/>
            <person name="Matsunawa H."/>
            <person name="Ichihara T."/>
            <person name="Shiohata N."/>
            <person name="Sano S."/>
            <person name="Moriya S."/>
            <person name="Momiyama H."/>
            <person name="Satoh N."/>
            <person name="Takami S."/>
            <person name="Terashima Y."/>
            <person name="Suzuki O."/>
            <person name="Nakagawa S."/>
            <person name="Senoh A."/>
            <person name="Mizoguchi H."/>
            <person name="Goto Y."/>
            <person name="Shimizu F."/>
            <person name="Wakebe H."/>
            <person name="Hishigaki H."/>
            <person name="Watanabe T."/>
            <person name="Sugiyama A."/>
            <person name="Takemoto M."/>
            <person name="Kawakami B."/>
            <person name="Yamazaki M."/>
            <person name="Watanabe K."/>
            <person name="Kumagai A."/>
            <person name="Itakura S."/>
            <person name="Fukuzumi Y."/>
            <person name="Fujimori Y."/>
            <person name="Komiyama M."/>
            <person name="Tashiro H."/>
            <person name="Tanigami A."/>
            <person name="Fujiwara T."/>
            <person name="Ono T."/>
            <person name="Yamada K."/>
            <person name="Fujii Y."/>
            <person name="Ozaki K."/>
            <person name="Hirao M."/>
            <person name="Ohmori Y."/>
            <person name="Kawabata A."/>
            <person name="Hikiji T."/>
            <person name="Kobatake N."/>
            <person name="Inagaki H."/>
            <person name="Ikema Y."/>
            <person name="Okamoto S."/>
            <person name="Okitani R."/>
            <person name="Kawakami T."/>
            <person name="Noguchi S."/>
            <person name="Itoh T."/>
            <person name="Shigeta K."/>
            <person name="Senba T."/>
            <person name="Matsumura K."/>
            <person name="Nakajima Y."/>
            <person name="Mizuno T."/>
            <person name="Morinaga M."/>
            <person name="Sasaki M."/>
            <person name="Togashi T."/>
            <person name="Oyama M."/>
            <person name="Hata H."/>
            <person name="Watanabe M."/>
            <person name="Komatsu T."/>
            <person name="Mizushima-Sugano J."/>
            <person name="Satoh T."/>
            <person name="Shirai Y."/>
            <person name="Takahashi Y."/>
            <person name="Nakagawa K."/>
            <person name="Okumura K."/>
            <person name="Nagase T."/>
            <person name="Nomura N."/>
            <person name="Kikuchi H."/>
            <person name="Masuho Y."/>
            <person name="Yamashita R."/>
            <person name="Nakai K."/>
            <person name="Yada T."/>
            <person name="Nakamura Y."/>
            <person name="Ohara O."/>
            <person name="Isogai T."/>
            <person name="Sugano S."/>
        </authorList>
    </citation>
    <scope>NUCLEOTIDE SEQUENCE [LARGE SCALE MRNA] (ISOFORMS 4 AND 5)</scope>
    <source>
        <tissue>Spleen</tissue>
        <tissue>Urinary bladder</tissue>
    </source>
</reference>
<reference key="5">
    <citation type="journal article" date="1999" name="Nature">
        <title>The DNA sequence of human chromosome 22.</title>
        <authorList>
            <person name="Dunham I."/>
            <person name="Hunt A.R."/>
            <person name="Collins J.E."/>
            <person name="Bruskiewich R."/>
            <person name="Beare D.M."/>
            <person name="Clamp M."/>
            <person name="Smink L.J."/>
            <person name="Ainscough R."/>
            <person name="Almeida J.P."/>
            <person name="Babbage A.K."/>
            <person name="Bagguley C."/>
            <person name="Bailey J."/>
            <person name="Barlow K.F."/>
            <person name="Bates K.N."/>
            <person name="Beasley O.P."/>
            <person name="Bird C.P."/>
            <person name="Blakey S.E."/>
            <person name="Bridgeman A.M."/>
            <person name="Buck D."/>
            <person name="Burgess J."/>
            <person name="Burrill W.D."/>
            <person name="Burton J."/>
            <person name="Carder C."/>
            <person name="Carter N.P."/>
            <person name="Chen Y."/>
            <person name="Clark G."/>
            <person name="Clegg S.M."/>
            <person name="Cobley V.E."/>
            <person name="Cole C.G."/>
            <person name="Collier R.E."/>
            <person name="Connor R."/>
            <person name="Conroy D."/>
            <person name="Corby N.R."/>
            <person name="Coville G.J."/>
            <person name="Cox A.V."/>
            <person name="Davis J."/>
            <person name="Dawson E."/>
            <person name="Dhami P.D."/>
            <person name="Dockree C."/>
            <person name="Dodsworth S.J."/>
            <person name="Durbin R.M."/>
            <person name="Ellington A.G."/>
            <person name="Evans K.L."/>
            <person name="Fey J.M."/>
            <person name="Fleming K."/>
            <person name="French L."/>
            <person name="Garner A.A."/>
            <person name="Gilbert J.G.R."/>
            <person name="Goward M.E."/>
            <person name="Grafham D.V."/>
            <person name="Griffiths M.N.D."/>
            <person name="Hall C."/>
            <person name="Hall R.E."/>
            <person name="Hall-Tamlyn G."/>
            <person name="Heathcott R.W."/>
            <person name="Ho S."/>
            <person name="Holmes S."/>
            <person name="Hunt S.E."/>
            <person name="Jones M.C."/>
            <person name="Kershaw J."/>
            <person name="Kimberley A.M."/>
            <person name="King A."/>
            <person name="Laird G.K."/>
            <person name="Langford C.F."/>
            <person name="Leversha M.A."/>
            <person name="Lloyd C."/>
            <person name="Lloyd D.M."/>
            <person name="Martyn I.D."/>
            <person name="Mashreghi-Mohammadi M."/>
            <person name="Matthews L.H."/>
            <person name="Mccann O.T."/>
            <person name="Mcclay J."/>
            <person name="Mclaren S."/>
            <person name="McMurray A.A."/>
            <person name="Milne S.A."/>
            <person name="Mortimore B.J."/>
            <person name="Odell C.N."/>
            <person name="Pavitt R."/>
            <person name="Pearce A.V."/>
            <person name="Pearson D."/>
            <person name="Phillimore B.J.C.T."/>
            <person name="Phillips S.H."/>
            <person name="Plumb R.W."/>
            <person name="Ramsay H."/>
            <person name="Ramsey Y."/>
            <person name="Rogers L."/>
            <person name="Ross M.T."/>
            <person name="Scott C.E."/>
            <person name="Sehra H.K."/>
            <person name="Skuce C.D."/>
            <person name="Smalley S."/>
            <person name="Smith M.L."/>
            <person name="Soderlund C."/>
            <person name="Spragon L."/>
            <person name="Steward C.A."/>
            <person name="Sulston J.E."/>
            <person name="Swann R.M."/>
            <person name="Vaudin M."/>
            <person name="Wall M."/>
            <person name="Wallis J.M."/>
            <person name="Whiteley M.N."/>
            <person name="Willey D.L."/>
            <person name="Williams L."/>
            <person name="Williams S.A."/>
            <person name="Williamson H."/>
            <person name="Wilmer T.E."/>
            <person name="Wilming L."/>
            <person name="Wright C.L."/>
            <person name="Hubbard T."/>
            <person name="Bentley D.R."/>
            <person name="Beck S."/>
            <person name="Rogers J."/>
            <person name="Shimizu N."/>
            <person name="Minoshima S."/>
            <person name="Kawasaki K."/>
            <person name="Sasaki T."/>
            <person name="Asakawa S."/>
            <person name="Kudoh J."/>
            <person name="Shintani A."/>
            <person name="Shibuya K."/>
            <person name="Yoshizaki Y."/>
            <person name="Aoki N."/>
            <person name="Mitsuyama S."/>
            <person name="Roe B.A."/>
            <person name="Chen F."/>
            <person name="Chu L."/>
            <person name="Crabtree J."/>
            <person name="Deschamps S."/>
            <person name="Do A."/>
            <person name="Do T."/>
            <person name="Dorman A."/>
            <person name="Fang F."/>
            <person name="Fu Y."/>
            <person name="Hu P."/>
            <person name="Hua A."/>
            <person name="Kenton S."/>
            <person name="Lai H."/>
            <person name="Lao H.I."/>
            <person name="Lewis J."/>
            <person name="Lewis S."/>
            <person name="Lin S.-P."/>
            <person name="Loh P."/>
            <person name="Malaj E."/>
            <person name="Nguyen T."/>
            <person name="Pan H."/>
            <person name="Phan S."/>
            <person name="Qi S."/>
            <person name="Qian Y."/>
            <person name="Ray L."/>
            <person name="Ren Q."/>
            <person name="Shaull S."/>
            <person name="Sloan D."/>
            <person name="Song L."/>
            <person name="Wang Q."/>
            <person name="Wang Y."/>
            <person name="Wang Z."/>
            <person name="White J."/>
            <person name="Willingham D."/>
            <person name="Wu H."/>
            <person name="Yao Z."/>
            <person name="Zhan M."/>
            <person name="Zhang G."/>
            <person name="Chissoe S."/>
            <person name="Murray J."/>
            <person name="Miller N."/>
            <person name="Minx P."/>
            <person name="Fulton R."/>
            <person name="Johnson D."/>
            <person name="Bemis G."/>
            <person name="Bentley D."/>
            <person name="Bradshaw H."/>
            <person name="Bourne S."/>
            <person name="Cordes M."/>
            <person name="Du Z."/>
            <person name="Fulton L."/>
            <person name="Goela D."/>
            <person name="Graves T."/>
            <person name="Hawkins J."/>
            <person name="Hinds K."/>
            <person name="Kemp K."/>
            <person name="Latreille P."/>
            <person name="Layman D."/>
            <person name="Ozersky P."/>
            <person name="Rohlfing T."/>
            <person name="Scheet P."/>
            <person name="Walker C."/>
            <person name="Wamsley A."/>
            <person name="Wohldmann P."/>
            <person name="Pepin K."/>
            <person name="Nelson J."/>
            <person name="Korf I."/>
            <person name="Bedell J.A."/>
            <person name="Hillier L.W."/>
            <person name="Mardis E."/>
            <person name="Waterston R."/>
            <person name="Wilson R."/>
            <person name="Emanuel B.S."/>
            <person name="Shaikh T."/>
            <person name="Kurahashi H."/>
            <person name="Saitta S."/>
            <person name="Budarf M.L."/>
            <person name="McDermid H.E."/>
            <person name="Johnson A."/>
            <person name="Wong A.C.C."/>
            <person name="Morrow B.E."/>
            <person name="Edelmann L."/>
            <person name="Kim U.J."/>
            <person name="Shizuya H."/>
            <person name="Simon M.I."/>
            <person name="Dumanski J.P."/>
            <person name="Peyrard M."/>
            <person name="Kedra D."/>
            <person name="Seroussi E."/>
            <person name="Fransson I."/>
            <person name="Tapia I."/>
            <person name="Bruder C.E."/>
            <person name="O'Brien K.P."/>
            <person name="Wilkinson P."/>
            <person name="Bodenteich A."/>
            <person name="Hartman K."/>
            <person name="Hu X."/>
            <person name="Khan A.S."/>
            <person name="Lane L."/>
            <person name="Tilahun Y."/>
            <person name="Wright H."/>
        </authorList>
    </citation>
    <scope>NUCLEOTIDE SEQUENCE [LARGE SCALE GENOMIC DNA]</scope>
</reference>
<reference key="6">
    <citation type="journal article" date="2004" name="Genome Res.">
        <title>The status, quality, and expansion of the NIH full-length cDNA project: the Mammalian Gene Collection (MGC).</title>
        <authorList>
            <consortium name="The MGC Project Team"/>
        </authorList>
    </citation>
    <scope>NUCLEOTIDE SEQUENCE [LARGE SCALE MRNA] (ISOFORM 1)</scope>
    <source>
        <tissue>Brain</tissue>
        <tissue>Lung</tissue>
        <tissue>Testis</tissue>
    </source>
</reference>
<reference key="7">
    <citation type="journal article" date="2001" name="Gene">
        <title>Genomic organization and expression profile of the parvin family of focal adhesion proteins in mice and humans.</title>
        <authorList>
            <person name="Korenbaum E."/>
            <person name="Olski T.M."/>
            <person name="Noegel A.A."/>
        </authorList>
    </citation>
    <scope>TISSUE SPECIFICITY</scope>
</reference>
<reference key="8">
    <citation type="journal article" date="2006" name="J. Immunol.">
        <title>The gamma-parvin-integrin-linked kinase complex is critically involved in leukocyte-substrate interaction.</title>
        <authorList>
            <person name="Yoshimi R."/>
            <person name="Yamaji S."/>
            <person name="Suzuki A."/>
            <person name="Mishima W."/>
            <person name="Okamura M."/>
            <person name="Obana T."/>
            <person name="Matsuda C."/>
            <person name="Miwa Y."/>
            <person name="Ohno S."/>
            <person name="Ishigatsubo Y."/>
        </authorList>
    </citation>
    <scope>FUNCTION</scope>
    <scope>INTERACTION WITH ILK AND ARHGEF6</scope>
    <scope>SUBCELLULAR LOCATION</scope>
</reference>
<reference key="9">
    <citation type="journal article" date="2015" name="Proteomics">
        <title>N-terminome analysis of the human mitochondrial proteome.</title>
        <authorList>
            <person name="Vaca Jacome A.S."/>
            <person name="Rabilloud T."/>
            <person name="Schaeffer-Reiss C."/>
            <person name="Rompais M."/>
            <person name="Ayoub D."/>
            <person name="Lane L."/>
            <person name="Bairoch A."/>
            <person name="Van Dorsselaer A."/>
            <person name="Carapito C."/>
        </authorList>
    </citation>
    <scope>ACETYLATION [LARGE SCALE ANALYSIS] AT MET-1</scope>
    <scope>IDENTIFICATION BY MASS SPECTROMETRY [LARGE SCALE ANALYSIS]</scope>
</reference>
<sequence>MEPEFLYDLLQLPKGVEPPAEEELSKGGKKKYLPPTSRKDPKFEELQKVLMEWINATLLPEHIVVRSLEEDMFDGLILHHLFQRLAALKLEAEDIALTATSQKHKLTVVLEAVNRSLQLEEWQAKWSVESIFNKDLLSTLHLLVALAKRFQPDLSLPTNVQVEVITIESTKSGLKSEKLVEQLTEYSTDKDEPPKDVFDELFKLAPEKVNAVKEAIVNFVNQKLDRLGLSVQNLDTQFADGVILLLLIGQLEGFFLHLKEFYLTPNSPAEMLHNVTLALELLKDEGLLSCPVSPEDIVNKDAKSTLRVLYGLFCKHTQKAHRDRTPHGAPN</sequence>
<gene>
    <name type="primary">PARVG</name>
</gene>
<name>PARVG_HUMAN</name>
<protein>
    <recommendedName>
        <fullName>Gamma-parvin</fullName>
    </recommendedName>
</protein>
<proteinExistence type="evidence at protein level"/>
<accession>Q9HBI0</accession>
<accession>B4DDW5</accession>
<accession>E7EVM6</accession>
<accession>Q9BQX5</accession>
<accession>Q9NSG1</accession>
<keyword id="KW-0007">Acetylation</keyword>
<keyword id="KW-0009">Actin-binding</keyword>
<keyword id="KW-0025">Alternative splicing</keyword>
<keyword id="KW-0130">Cell adhesion</keyword>
<keyword id="KW-0965">Cell junction</keyword>
<keyword id="KW-1003">Cell membrane</keyword>
<keyword id="KW-0963">Cytoplasm</keyword>
<keyword id="KW-0206">Cytoskeleton</keyword>
<keyword id="KW-0472">Membrane</keyword>
<keyword id="KW-1267">Proteomics identification</keyword>
<keyword id="KW-1185">Reference proteome</keyword>
<keyword id="KW-0677">Repeat</keyword>
<evidence type="ECO:0000250" key="1"/>
<evidence type="ECO:0000255" key="2">
    <source>
        <dbReference type="PROSITE-ProRule" id="PRU00044"/>
    </source>
</evidence>
<evidence type="ECO:0000256" key="3">
    <source>
        <dbReference type="SAM" id="MobiDB-lite"/>
    </source>
</evidence>
<evidence type="ECO:0000269" key="4">
    <source>
    </source>
</evidence>
<evidence type="ECO:0000269" key="5">
    <source>
    </source>
</evidence>
<evidence type="ECO:0000303" key="6">
    <source>
    </source>
</evidence>
<evidence type="ECO:0000303" key="7">
    <source>
    </source>
</evidence>
<evidence type="ECO:0000305" key="8"/>
<evidence type="ECO:0007744" key="9">
    <source>
    </source>
</evidence>
<feature type="chain" id="PRO_0000121585" description="Gamma-parvin">
    <location>
        <begin position="1"/>
        <end position="331"/>
    </location>
</feature>
<feature type="domain" description="Calponin-homology (CH) 1" evidence="2">
    <location>
        <begin position="44"/>
        <end position="151"/>
    </location>
</feature>
<feature type="domain" description="Calponin-homology (CH) 2" evidence="2">
    <location>
        <begin position="210"/>
        <end position="317"/>
    </location>
</feature>
<feature type="region of interest" description="Disordered" evidence="3">
    <location>
        <begin position="17"/>
        <end position="39"/>
    </location>
</feature>
<feature type="modified residue" description="N-acetylmethionine" evidence="9">
    <location>
        <position position="1"/>
    </location>
</feature>
<feature type="splice variant" id="VSP_045145" description="In isoform 4." evidence="7">
    <original>M</original>
    <variation>MVPAKEQVPGRCDSTQRCFPGPSNWTGAGGRAGSQPFVGDGTLGTPNFCWDHKEKRAAESQLQAWEAM</variation>
    <location>
        <position position="1"/>
    </location>
</feature>
<feature type="splice variant" id="VSP_045146" description="In isoform 4 and isoform 5." evidence="7">
    <original>VLMEWINATLLPEHIVVRSLEE</original>
    <variation>HTWPSPVTGTGDTICGLARKTW</variation>
    <location>
        <begin position="49"/>
        <end position="70"/>
    </location>
</feature>
<feature type="splice variant" id="VSP_045147" description="In isoform 4 and isoform 5." evidence="7">
    <location>
        <begin position="71"/>
        <end position="331"/>
    </location>
</feature>
<feature type="splice variant" id="VSP_012953" description="In isoform 3." evidence="6">
    <original>S</original>
    <variation>R</variation>
    <location>
        <position position="187"/>
    </location>
</feature>
<feature type="splice variant" id="VSP_012954" description="In isoform 3." evidence="6">
    <location>
        <begin position="188"/>
        <end position="331"/>
    </location>
</feature>
<feature type="splice variant" id="VSP_004540" description="In isoform 2." evidence="6">
    <original>LH</original>
    <variation>IS</variation>
    <location>
        <begin position="272"/>
        <end position="273"/>
    </location>
</feature>
<feature type="splice variant" id="VSP_004541" description="In isoform 2." evidence="6">
    <location>
        <begin position="274"/>
        <end position="331"/>
    </location>
</feature>
<feature type="sequence conflict" description="In Ref. 4; AK307294." evidence="8" ref="4">
    <original>C</original>
    <variation>R</variation>
    <location sequence="Q9HBI0-5">
        <position position="63"/>
    </location>
</feature>